<organism>
    <name type="scientific">Aotus nigriceps</name>
    <name type="common">Black-headed night monkey</name>
    <dbReference type="NCBI Taxonomy" id="57175"/>
    <lineage>
        <taxon>Eukaryota</taxon>
        <taxon>Metazoa</taxon>
        <taxon>Chordata</taxon>
        <taxon>Craniata</taxon>
        <taxon>Vertebrata</taxon>
        <taxon>Euteleostomi</taxon>
        <taxon>Mammalia</taxon>
        <taxon>Eutheria</taxon>
        <taxon>Euarchontoglires</taxon>
        <taxon>Primates</taxon>
        <taxon>Haplorrhini</taxon>
        <taxon>Platyrrhini</taxon>
        <taxon>Aotidae</taxon>
        <taxon>Aotus</taxon>
    </lineage>
</organism>
<sequence>MATPAQLGLQNATSPIMEELIAFHDHALMIIFLISSLVLYIISLMLTTKLTHTSTMNAQEIEMIWTILPAIILIMIALPSLRILYMTDEFNKPYLTLKAIGHQWYWSYEYSDYEDLAFDSYITPTYFLEPGEFRLLEVDNRTTLPMEADIRMLITSQDVLHSWAVPSLGVKTDAIPGRLNQAMLASMRPGLFYGQCSEICGSNHSFMPIVLEFIYFQDFEVWASYLYIVSL</sequence>
<dbReference type="EC" id="7.1.1.9"/>
<dbReference type="EMBL" id="AF352256">
    <property type="protein sequence ID" value="AAL83932.1"/>
    <property type="molecule type" value="Genomic_DNA"/>
</dbReference>
<dbReference type="EMBL" id="AF352257">
    <property type="protein sequence ID" value="AAL83933.1"/>
    <property type="molecule type" value="Genomic_DNA"/>
</dbReference>
<dbReference type="EMBL" id="AF352258">
    <property type="protein sequence ID" value="AAL83934.1"/>
    <property type="molecule type" value="Genomic_DNA"/>
</dbReference>
<dbReference type="SMR" id="Q7IC90"/>
<dbReference type="GO" id="GO:0005743">
    <property type="term" value="C:mitochondrial inner membrane"/>
    <property type="evidence" value="ECO:0007669"/>
    <property type="project" value="UniProtKB-SubCell"/>
</dbReference>
<dbReference type="GO" id="GO:0045277">
    <property type="term" value="C:respiratory chain complex IV"/>
    <property type="evidence" value="ECO:0000250"/>
    <property type="project" value="UniProtKB"/>
</dbReference>
<dbReference type="GO" id="GO:0005507">
    <property type="term" value="F:copper ion binding"/>
    <property type="evidence" value="ECO:0007669"/>
    <property type="project" value="InterPro"/>
</dbReference>
<dbReference type="GO" id="GO:0004129">
    <property type="term" value="F:cytochrome-c oxidase activity"/>
    <property type="evidence" value="ECO:0007669"/>
    <property type="project" value="UniProtKB-EC"/>
</dbReference>
<dbReference type="GO" id="GO:0042773">
    <property type="term" value="P:ATP synthesis coupled electron transport"/>
    <property type="evidence" value="ECO:0007669"/>
    <property type="project" value="TreeGrafter"/>
</dbReference>
<dbReference type="CDD" id="cd13912">
    <property type="entry name" value="CcO_II_C"/>
    <property type="match status" value="1"/>
</dbReference>
<dbReference type="FunFam" id="1.10.287.90:FF:000001">
    <property type="entry name" value="Cytochrome c oxidase subunit 2"/>
    <property type="match status" value="1"/>
</dbReference>
<dbReference type="FunFam" id="2.60.40.420:FF:000001">
    <property type="entry name" value="Cytochrome c oxidase subunit 2"/>
    <property type="match status" value="1"/>
</dbReference>
<dbReference type="Gene3D" id="1.10.287.90">
    <property type="match status" value="1"/>
</dbReference>
<dbReference type="Gene3D" id="2.60.40.420">
    <property type="entry name" value="Cupredoxins - blue copper proteins"/>
    <property type="match status" value="1"/>
</dbReference>
<dbReference type="InterPro" id="IPR045187">
    <property type="entry name" value="CcO_II"/>
</dbReference>
<dbReference type="InterPro" id="IPR002429">
    <property type="entry name" value="CcO_II-like_C"/>
</dbReference>
<dbReference type="InterPro" id="IPR034210">
    <property type="entry name" value="CcO_II_C"/>
</dbReference>
<dbReference type="InterPro" id="IPR001505">
    <property type="entry name" value="Copper_CuA"/>
</dbReference>
<dbReference type="InterPro" id="IPR008972">
    <property type="entry name" value="Cupredoxin"/>
</dbReference>
<dbReference type="InterPro" id="IPR014222">
    <property type="entry name" value="Cyt_c_oxidase_su2"/>
</dbReference>
<dbReference type="InterPro" id="IPR011759">
    <property type="entry name" value="Cyt_c_oxidase_su2_TM_dom"/>
</dbReference>
<dbReference type="InterPro" id="IPR036257">
    <property type="entry name" value="Cyt_c_oxidase_su2_TM_sf"/>
</dbReference>
<dbReference type="NCBIfam" id="TIGR02866">
    <property type="entry name" value="CoxB"/>
    <property type="match status" value="1"/>
</dbReference>
<dbReference type="PANTHER" id="PTHR22888:SF9">
    <property type="entry name" value="CYTOCHROME C OXIDASE SUBUNIT 2"/>
    <property type="match status" value="1"/>
</dbReference>
<dbReference type="PANTHER" id="PTHR22888">
    <property type="entry name" value="CYTOCHROME C OXIDASE, SUBUNIT II"/>
    <property type="match status" value="1"/>
</dbReference>
<dbReference type="Pfam" id="PF00116">
    <property type="entry name" value="COX2"/>
    <property type="match status" value="1"/>
</dbReference>
<dbReference type="Pfam" id="PF02790">
    <property type="entry name" value="COX2_TM"/>
    <property type="match status" value="1"/>
</dbReference>
<dbReference type="PRINTS" id="PR01166">
    <property type="entry name" value="CYCOXIDASEII"/>
</dbReference>
<dbReference type="SUPFAM" id="SSF49503">
    <property type="entry name" value="Cupredoxins"/>
    <property type="match status" value="1"/>
</dbReference>
<dbReference type="SUPFAM" id="SSF81464">
    <property type="entry name" value="Cytochrome c oxidase subunit II-like, transmembrane region"/>
    <property type="match status" value="1"/>
</dbReference>
<dbReference type="PROSITE" id="PS00078">
    <property type="entry name" value="COX2"/>
    <property type="match status" value="1"/>
</dbReference>
<dbReference type="PROSITE" id="PS50857">
    <property type="entry name" value="COX2_CUA"/>
    <property type="match status" value="1"/>
</dbReference>
<dbReference type="PROSITE" id="PS50999">
    <property type="entry name" value="COX2_TM"/>
    <property type="match status" value="1"/>
</dbReference>
<name>COX2_AOTNI</name>
<reference key="1">
    <citation type="submission" date="2001-02" db="EMBL/GenBank/DDBJ databases">
        <title>Phylogenetic analysis of the owl monkey genus Aotus based on the mitochondrial cytochrome oxidase II gene.</title>
        <authorList>
            <person name="Suarez C.F."/>
            <person name="Ripoll V."/>
            <person name="Pardo L."/>
            <person name="Patarroyo M.A."/>
            <person name="Patarroyo M.E."/>
            <person name="Corredor V."/>
        </authorList>
    </citation>
    <scope>NUCLEOTIDE SEQUENCE [GENOMIC DNA]</scope>
</reference>
<feature type="chain" id="PRO_0000183496" description="Cytochrome c oxidase subunit 2">
    <location>
        <begin position="1"/>
        <end position="231"/>
    </location>
</feature>
<feature type="topological domain" description="Mitochondrial intermembrane" evidence="3">
    <location>
        <begin position="1"/>
        <end position="14"/>
    </location>
</feature>
<feature type="transmembrane region" description="Helical; Name=I" evidence="3">
    <location>
        <begin position="15"/>
        <end position="45"/>
    </location>
</feature>
<feature type="topological domain" description="Mitochondrial matrix" evidence="3">
    <location>
        <begin position="46"/>
        <end position="59"/>
    </location>
</feature>
<feature type="transmembrane region" description="Helical; Name=II" evidence="3">
    <location>
        <begin position="60"/>
        <end position="87"/>
    </location>
</feature>
<feature type="topological domain" description="Mitochondrial intermembrane" evidence="3">
    <location>
        <begin position="88"/>
        <end position="231"/>
    </location>
</feature>
<feature type="binding site" evidence="3">
    <location>
        <position position="161"/>
    </location>
    <ligand>
        <name>Cu cation</name>
        <dbReference type="ChEBI" id="CHEBI:23378"/>
        <label>A1</label>
    </ligand>
</feature>
<feature type="binding site" evidence="3">
    <location>
        <position position="196"/>
    </location>
    <ligand>
        <name>Cu cation</name>
        <dbReference type="ChEBI" id="CHEBI:23378"/>
        <label>A1</label>
    </ligand>
</feature>
<feature type="binding site" evidence="3">
    <location>
        <position position="196"/>
    </location>
    <ligand>
        <name>Cu cation</name>
        <dbReference type="ChEBI" id="CHEBI:23378"/>
        <label>A2</label>
    </ligand>
</feature>
<feature type="binding site" evidence="3">
    <location>
        <position position="198"/>
    </location>
    <ligand>
        <name>Cu cation</name>
        <dbReference type="ChEBI" id="CHEBI:23378"/>
        <label>A2</label>
    </ligand>
</feature>
<feature type="binding site" evidence="3">
    <location>
        <position position="198"/>
    </location>
    <ligand>
        <name>Mg(2+)</name>
        <dbReference type="ChEBI" id="CHEBI:18420"/>
        <note>ligand shared with MT-CO1</note>
    </ligand>
</feature>
<feature type="binding site" evidence="3">
    <location>
        <position position="200"/>
    </location>
    <ligand>
        <name>Cu cation</name>
        <dbReference type="ChEBI" id="CHEBI:23378"/>
        <label>A1</label>
    </ligand>
</feature>
<feature type="binding site" evidence="3">
    <location>
        <position position="200"/>
    </location>
    <ligand>
        <name>Cu cation</name>
        <dbReference type="ChEBI" id="CHEBI:23378"/>
        <label>A2</label>
    </ligand>
</feature>
<feature type="binding site" evidence="3">
    <location>
        <position position="204"/>
    </location>
    <ligand>
        <name>Cu cation</name>
        <dbReference type="ChEBI" id="CHEBI:23378"/>
        <label>A2</label>
    </ligand>
</feature>
<feature type="binding site" evidence="3">
    <location>
        <position position="207"/>
    </location>
    <ligand>
        <name>Cu cation</name>
        <dbReference type="ChEBI" id="CHEBI:23378"/>
        <label>A1</label>
    </ligand>
</feature>
<evidence type="ECO:0000250" key="1">
    <source>
        <dbReference type="UniProtKB" id="P00403"/>
    </source>
</evidence>
<evidence type="ECO:0000250" key="2">
    <source>
        <dbReference type="UniProtKB" id="P00410"/>
    </source>
</evidence>
<evidence type="ECO:0000250" key="3">
    <source>
        <dbReference type="UniProtKB" id="P68530"/>
    </source>
</evidence>
<evidence type="ECO:0000305" key="4"/>
<gene>
    <name type="primary">MT-CO2</name>
    <name type="synonym">COII</name>
    <name type="synonym">COXII</name>
    <name type="synonym">MTCO2</name>
</gene>
<proteinExistence type="inferred from homology"/>
<accession>Q7IC90</accession>
<comment type="function">
    <text evidence="2">Component of the cytochrome c oxidase, the last enzyme in the mitochondrial electron transport chain which drives oxidative phosphorylation. The respiratory chain contains 3 multisubunit complexes succinate dehydrogenase (complex II, CII), ubiquinol-cytochrome c oxidoreductase (cytochrome b-c1 complex, complex III, CIII) and cytochrome c oxidase (complex IV, CIV), that cooperate to transfer electrons derived from NADH and succinate to molecular oxygen, creating an electrochemical gradient over the inner membrane that drives transmembrane transport and the ATP synthase. Cytochrome c oxidase is the component of the respiratory chain that catalyzes the reduction of oxygen to water. Electrons originating from reduced cytochrome c in the intermembrane space (IMS) are transferred via the dinuclear copper A center (CU(A)) of subunit 2 and heme A of subunit 1 to the active site in subunit 1, a binuclear center (BNC) formed by heme A3 and copper B (CU(B)). The BNC reduces molecular oxygen to 2 water molecules using 4 electrons from cytochrome c in the IMS and 4 protons from the mitochondrial matrix.</text>
</comment>
<comment type="catalytic activity">
    <reaction evidence="2">
        <text>4 Fe(II)-[cytochrome c] + O2 + 8 H(+)(in) = 4 Fe(III)-[cytochrome c] + 2 H2O + 4 H(+)(out)</text>
        <dbReference type="Rhea" id="RHEA:11436"/>
        <dbReference type="Rhea" id="RHEA-COMP:10350"/>
        <dbReference type="Rhea" id="RHEA-COMP:14399"/>
        <dbReference type="ChEBI" id="CHEBI:15377"/>
        <dbReference type="ChEBI" id="CHEBI:15378"/>
        <dbReference type="ChEBI" id="CHEBI:15379"/>
        <dbReference type="ChEBI" id="CHEBI:29033"/>
        <dbReference type="ChEBI" id="CHEBI:29034"/>
        <dbReference type="EC" id="7.1.1.9"/>
    </reaction>
    <physiologicalReaction direction="left-to-right" evidence="2">
        <dbReference type="Rhea" id="RHEA:11437"/>
    </physiologicalReaction>
</comment>
<comment type="cofactor">
    <cofactor evidence="3">
        <name>Cu cation</name>
        <dbReference type="ChEBI" id="CHEBI:23378"/>
    </cofactor>
    <text evidence="3">Binds a dinuclear copper A center per subunit.</text>
</comment>
<comment type="subunit">
    <text evidence="1 3">Component of the cytochrome c oxidase (complex IV, CIV), a multisubunit enzyme composed of 14 subunits. The complex is composed of a catalytic core of 3 subunits MT-CO1, MT-CO2 and MT-CO3, encoded in the mitochondrial DNA, and 11 supernumerary subunits COX4I, COX5A, COX5B, COX6A, COX6B, COX6C, COX7A, COX7B, COX7C, COX8 and NDUFA4, which are encoded in the nuclear genome. The complex exists as a monomer or a dimer and forms supercomplexes (SCs) in the inner mitochondrial membrane with NADH-ubiquinone oxidoreductase (complex I, CI) and ubiquinol-cytochrome c oxidoreductase (cytochrome b-c1 complex, complex III, CIII), resulting in different assemblies (supercomplex SCI(1)III(2)IV(1) and megacomplex MCI(2)III(2)IV(2)) (By similarity). Found in a complex with TMEM177, COA6, COX18, COX20, SCO1 and SCO2. Interacts with TMEM177 in a COX20-dependent manner. Interacts with COX20. Interacts with COX16 (By similarity).</text>
</comment>
<comment type="subcellular location">
    <subcellularLocation>
        <location evidence="3">Mitochondrion inner membrane</location>
        <topology evidence="3">Multi-pass membrane protein</topology>
    </subcellularLocation>
</comment>
<comment type="similarity">
    <text evidence="4">Belongs to the cytochrome c oxidase subunit 2 family.</text>
</comment>
<geneLocation type="mitochondrion"/>
<protein>
    <recommendedName>
        <fullName>Cytochrome c oxidase subunit 2</fullName>
        <ecNumber>7.1.1.9</ecNumber>
    </recommendedName>
    <alternativeName>
        <fullName>Cytochrome c oxidase polypeptide II</fullName>
    </alternativeName>
</protein>
<keyword id="KW-0186">Copper</keyword>
<keyword id="KW-0249">Electron transport</keyword>
<keyword id="KW-0460">Magnesium</keyword>
<keyword id="KW-0472">Membrane</keyword>
<keyword id="KW-0479">Metal-binding</keyword>
<keyword id="KW-0496">Mitochondrion</keyword>
<keyword id="KW-0999">Mitochondrion inner membrane</keyword>
<keyword id="KW-0679">Respiratory chain</keyword>
<keyword id="KW-1278">Translocase</keyword>
<keyword id="KW-0812">Transmembrane</keyword>
<keyword id="KW-1133">Transmembrane helix</keyword>
<keyword id="KW-0813">Transport</keyword>